<dbReference type="EC" id="3.6.1.7"/>
<dbReference type="EMBL" id="CP000462">
    <property type="protein sequence ID" value="ABK36612.1"/>
    <property type="molecule type" value="Genomic_DNA"/>
</dbReference>
<dbReference type="RefSeq" id="WP_005300975.1">
    <property type="nucleotide sequence ID" value="NC_008570.1"/>
</dbReference>
<dbReference type="RefSeq" id="YP_856754.1">
    <property type="nucleotide sequence ID" value="NC_008570.1"/>
</dbReference>
<dbReference type="SMR" id="A0KKF3"/>
<dbReference type="STRING" id="380703.AHA_2230"/>
<dbReference type="EnsemblBacteria" id="ABK36612">
    <property type="protein sequence ID" value="ABK36612"/>
    <property type="gene ID" value="AHA_2230"/>
</dbReference>
<dbReference type="KEGG" id="aha:AHA_2230"/>
<dbReference type="PATRIC" id="fig|380703.7.peg.2231"/>
<dbReference type="eggNOG" id="COG1254">
    <property type="taxonomic scope" value="Bacteria"/>
</dbReference>
<dbReference type="HOGENOM" id="CLU_141932_1_2_6"/>
<dbReference type="OrthoDB" id="5295388at2"/>
<dbReference type="PRO" id="PR:A0KKF3"/>
<dbReference type="Proteomes" id="UP000000756">
    <property type="component" value="Chromosome"/>
</dbReference>
<dbReference type="GO" id="GO:0003998">
    <property type="term" value="F:acylphosphatase activity"/>
    <property type="evidence" value="ECO:0007669"/>
    <property type="project" value="UniProtKB-EC"/>
</dbReference>
<dbReference type="Gene3D" id="3.30.70.100">
    <property type="match status" value="1"/>
</dbReference>
<dbReference type="InterPro" id="IPR020456">
    <property type="entry name" value="Acylphosphatase"/>
</dbReference>
<dbReference type="InterPro" id="IPR001792">
    <property type="entry name" value="Acylphosphatase-like_dom"/>
</dbReference>
<dbReference type="InterPro" id="IPR036046">
    <property type="entry name" value="Acylphosphatase-like_dom_sf"/>
</dbReference>
<dbReference type="InterPro" id="IPR017968">
    <property type="entry name" value="Acylphosphatase_CS"/>
</dbReference>
<dbReference type="PANTHER" id="PTHR47268">
    <property type="entry name" value="ACYLPHOSPHATASE"/>
    <property type="match status" value="1"/>
</dbReference>
<dbReference type="PANTHER" id="PTHR47268:SF4">
    <property type="entry name" value="ACYLPHOSPHATASE"/>
    <property type="match status" value="1"/>
</dbReference>
<dbReference type="Pfam" id="PF00708">
    <property type="entry name" value="Acylphosphatase"/>
    <property type="match status" value="1"/>
</dbReference>
<dbReference type="SUPFAM" id="SSF54975">
    <property type="entry name" value="Acylphosphatase/BLUF domain-like"/>
    <property type="match status" value="1"/>
</dbReference>
<dbReference type="PROSITE" id="PS00150">
    <property type="entry name" value="ACYLPHOSPHATASE_1"/>
    <property type="match status" value="1"/>
</dbReference>
<dbReference type="PROSITE" id="PS51160">
    <property type="entry name" value="ACYLPHOSPHATASE_3"/>
    <property type="match status" value="1"/>
</dbReference>
<reference key="1">
    <citation type="journal article" date="2006" name="J. Bacteriol.">
        <title>Genome sequence of Aeromonas hydrophila ATCC 7966T: jack of all trades.</title>
        <authorList>
            <person name="Seshadri R."/>
            <person name="Joseph S.W."/>
            <person name="Chopra A.K."/>
            <person name="Sha J."/>
            <person name="Shaw J."/>
            <person name="Graf J."/>
            <person name="Haft D.H."/>
            <person name="Wu M."/>
            <person name="Ren Q."/>
            <person name="Rosovitz M.J."/>
            <person name="Madupu R."/>
            <person name="Tallon L."/>
            <person name="Kim M."/>
            <person name="Jin S."/>
            <person name="Vuong H."/>
            <person name="Stine O.C."/>
            <person name="Ali A."/>
            <person name="Horneman A.J."/>
            <person name="Heidelberg J.F."/>
        </authorList>
    </citation>
    <scope>NUCLEOTIDE SEQUENCE [LARGE SCALE GENOMIC DNA]</scope>
    <source>
        <strain>ATCC 7966 / DSM 30187 / BCRC 13018 / CCUG 14551 / JCM 1027 / KCTC 2358 / NCIMB 9240 / NCTC 8049</strain>
    </source>
</reference>
<accession>A0KKF3</accession>
<feature type="chain" id="PRO_0000326644" description="Acylphosphatase">
    <location>
        <begin position="1"/>
        <end position="90"/>
    </location>
</feature>
<feature type="domain" description="Acylphosphatase-like" evidence="1">
    <location>
        <begin position="5"/>
        <end position="90"/>
    </location>
</feature>
<feature type="active site" evidence="1">
    <location>
        <position position="20"/>
    </location>
</feature>
<feature type="active site" evidence="1">
    <location>
        <position position="38"/>
    </location>
</feature>
<name>ACYP_AERHH</name>
<gene>
    <name type="primary">acyP</name>
    <name type="ordered locus">AHA_2230</name>
</gene>
<organism>
    <name type="scientific">Aeromonas hydrophila subsp. hydrophila (strain ATCC 7966 / DSM 30187 / BCRC 13018 / CCUG 14551 / JCM 1027 / KCTC 2358 / NCIMB 9240 / NCTC 8049)</name>
    <dbReference type="NCBI Taxonomy" id="380703"/>
    <lineage>
        <taxon>Bacteria</taxon>
        <taxon>Pseudomonadati</taxon>
        <taxon>Pseudomonadota</taxon>
        <taxon>Gammaproteobacteria</taxon>
        <taxon>Aeromonadales</taxon>
        <taxon>Aeromonadaceae</taxon>
        <taxon>Aeromonas</taxon>
    </lineage>
</organism>
<comment type="catalytic activity">
    <reaction>
        <text>an acyl phosphate + H2O = a carboxylate + phosphate + H(+)</text>
        <dbReference type="Rhea" id="RHEA:14965"/>
        <dbReference type="ChEBI" id="CHEBI:15377"/>
        <dbReference type="ChEBI" id="CHEBI:15378"/>
        <dbReference type="ChEBI" id="CHEBI:29067"/>
        <dbReference type="ChEBI" id="CHEBI:43474"/>
        <dbReference type="ChEBI" id="CHEBI:59918"/>
        <dbReference type="EC" id="3.6.1.7"/>
    </reaction>
</comment>
<comment type="similarity">
    <text evidence="2">Belongs to the acylphosphatase family.</text>
</comment>
<sequence length="90" mass="10126">MGEQSFVVRVWGLVQGVGFRYFTRERALQLGLRGHAYNLEDGSVEILICGPEQSVQMMLGWLERGPRTAEVTRMEYEVAPPPKGSGFHTN</sequence>
<protein>
    <recommendedName>
        <fullName>Acylphosphatase</fullName>
        <ecNumber>3.6.1.7</ecNumber>
    </recommendedName>
    <alternativeName>
        <fullName>Acylphosphate phosphohydrolase</fullName>
    </alternativeName>
</protein>
<keyword id="KW-0378">Hydrolase</keyword>
<keyword id="KW-1185">Reference proteome</keyword>
<evidence type="ECO:0000255" key="1">
    <source>
        <dbReference type="PROSITE-ProRule" id="PRU00520"/>
    </source>
</evidence>
<evidence type="ECO:0000305" key="2"/>
<proteinExistence type="inferred from homology"/>